<dbReference type="EC" id="1.7.1.13" evidence="1"/>
<dbReference type="EMBL" id="CP001164">
    <property type="protein sequence ID" value="ACI38651.1"/>
    <property type="molecule type" value="Genomic_DNA"/>
</dbReference>
<dbReference type="RefSeq" id="WP_000100435.1">
    <property type="nucleotide sequence ID" value="NC_011353.1"/>
</dbReference>
<dbReference type="SMR" id="B5Z3F9"/>
<dbReference type="KEGG" id="ecf:ECH74115_4058"/>
<dbReference type="HOGENOM" id="CLU_054738_0_0_6"/>
<dbReference type="UniPathway" id="UPA00392"/>
<dbReference type="GO" id="GO:0005737">
    <property type="term" value="C:cytoplasm"/>
    <property type="evidence" value="ECO:0007669"/>
    <property type="project" value="UniProtKB-SubCell"/>
</dbReference>
<dbReference type="GO" id="GO:0033739">
    <property type="term" value="F:preQ1 synthase activity"/>
    <property type="evidence" value="ECO:0007669"/>
    <property type="project" value="UniProtKB-UniRule"/>
</dbReference>
<dbReference type="GO" id="GO:0008616">
    <property type="term" value="P:queuosine biosynthetic process"/>
    <property type="evidence" value="ECO:0007669"/>
    <property type="project" value="UniProtKB-UniRule"/>
</dbReference>
<dbReference type="GO" id="GO:0006400">
    <property type="term" value="P:tRNA modification"/>
    <property type="evidence" value="ECO:0007669"/>
    <property type="project" value="UniProtKB-UniRule"/>
</dbReference>
<dbReference type="FunFam" id="3.30.1130.10:FF:000004">
    <property type="entry name" value="NADPH-dependent 7-cyano-7-deazaguanine reductase"/>
    <property type="match status" value="1"/>
</dbReference>
<dbReference type="Gene3D" id="3.30.1130.10">
    <property type="match status" value="2"/>
</dbReference>
<dbReference type="HAMAP" id="MF_00817">
    <property type="entry name" value="QueF_type2"/>
    <property type="match status" value="1"/>
</dbReference>
<dbReference type="InterPro" id="IPR043133">
    <property type="entry name" value="GTP-CH-I_C/QueF"/>
</dbReference>
<dbReference type="InterPro" id="IPR050084">
    <property type="entry name" value="NADPH_dep_7-cyano-7-deazaG_red"/>
</dbReference>
<dbReference type="InterPro" id="IPR029500">
    <property type="entry name" value="QueF"/>
</dbReference>
<dbReference type="InterPro" id="IPR029139">
    <property type="entry name" value="QueF_N"/>
</dbReference>
<dbReference type="InterPro" id="IPR016428">
    <property type="entry name" value="QueF_type2"/>
</dbReference>
<dbReference type="NCBIfam" id="TIGR03138">
    <property type="entry name" value="QueF"/>
    <property type="match status" value="1"/>
</dbReference>
<dbReference type="PANTHER" id="PTHR34354">
    <property type="entry name" value="NADPH-DEPENDENT 7-CYANO-7-DEAZAGUANINE REDUCTASE"/>
    <property type="match status" value="1"/>
</dbReference>
<dbReference type="PANTHER" id="PTHR34354:SF1">
    <property type="entry name" value="NADPH-DEPENDENT 7-CYANO-7-DEAZAGUANINE REDUCTASE"/>
    <property type="match status" value="1"/>
</dbReference>
<dbReference type="Pfam" id="PF14489">
    <property type="entry name" value="QueF"/>
    <property type="match status" value="1"/>
</dbReference>
<dbReference type="Pfam" id="PF14819">
    <property type="entry name" value="QueF_N"/>
    <property type="match status" value="1"/>
</dbReference>
<dbReference type="PIRSF" id="PIRSF004750">
    <property type="entry name" value="Nitrile_oxidored_YqcD_prd"/>
    <property type="match status" value="1"/>
</dbReference>
<dbReference type="SUPFAM" id="SSF55620">
    <property type="entry name" value="Tetrahydrobiopterin biosynthesis enzymes-like"/>
    <property type="match status" value="1"/>
</dbReference>
<reference key="1">
    <citation type="journal article" date="2011" name="Proc. Natl. Acad. Sci. U.S.A.">
        <title>Genomic anatomy of Escherichia coli O157:H7 outbreaks.</title>
        <authorList>
            <person name="Eppinger M."/>
            <person name="Mammel M.K."/>
            <person name="Leclerc J.E."/>
            <person name="Ravel J."/>
            <person name="Cebula T.A."/>
        </authorList>
    </citation>
    <scope>NUCLEOTIDE SEQUENCE [LARGE SCALE GENOMIC DNA]</scope>
    <source>
        <strain>EC4115 / EHEC</strain>
    </source>
</reference>
<protein>
    <recommendedName>
        <fullName evidence="1">NADPH-dependent 7-cyano-7-deazaguanine reductase</fullName>
        <ecNumber evidence="1">1.7.1.13</ecNumber>
    </recommendedName>
    <alternativeName>
        <fullName evidence="1">7-cyano-7-carbaguanine reductase</fullName>
    </alternativeName>
    <alternativeName>
        <fullName evidence="1">NADPH-dependent nitrile oxidoreductase</fullName>
    </alternativeName>
    <alternativeName>
        <fullName evidence="1">PreQ(0) reductase</fullName>
    </alternativeName>
</protein>
<gene>
    <name evidence="1" type="primary">queF</name>
    <name type="ordered locus">ECH74115_4058</name>
</gene>
<name>QUEF_ECO5E</name>
<comment type="function">
    <text evidence="1">Catalyzes the NADPH-dependent reduction of 7-cyano-7-deazaguanine (preQ0) to 7-aminomethyl-7-deazaguanine (preQ1).</text>
</comment>
<comment type="catalytic activity">
    <reaction evidence="1">
        <text>7-aminomethyl-7-carbaguanine + 2 NADP(+) = 7-cyano-7-deazaguanine + 2 NADPH + 3 H(+)</text>
        <dbReference type="Rhea" id="RHEA:13409"/>
        <dbReference type="ChEBI" id="CHEBI:15378"/>
        <dbReference type="ChEBI" id="CHEBI:45075"/>
        <dbReference type="ChEBI" id="CHEBI:57783"/>
        <dbReference type="ChEBI" id="CHEBI:58349"/>
        <dbReference type="ChEBI" id="CHEBI:58703"/>
        <dbReference type="EC" id="1.7.1.13"/>
    </reaction>
</comment>
<comment type="pathway">
    <text evidence="1">tRNA modification; tRNA-queuosine biosynthesis.</text>
</comment>
<comment type="subunit">
    <text evidence="1">Homodimer.</text>
</comment>
<comment type="subcellular location">
    <subcellularLocation>
        <location evidence="1">Cytoplasm</location>
    </subcellularLocation>
</comment>
<comment type="similarity">
    <text evidence="1">Belongs to the GTP cyclohydrolase I family. QueF type 2 subfamily.</text>
</comment>
<sequence length="282" mass="32549">MSSYANHQALAGLTLGKSTDYRDTYDASLLQGVPRSLNRDPLGLKADNLPFQGTDIWTLYELSWLNAKGLPQVAVGHVELDYTSVNLIESKSFKLYLNSFNQTRFNNWDEVRQTLERDLSTCAQGEVSVALYRLDELEGQPIGHFNGTCIDDQDITIDNYEFTTDYLENATSGEKVVEETLVSHLLKSNCLITHQPDWGSIQIQYRGRQIDREKLLRYLVSFRHHNEFHEQCVERIFNDLLRFCQPEKLSVYARYTRRGGLDINPWRSNSDFVPSTTRLVRQ</sequence>
<keyword id="KW-0963">Cytoplasm</keyword>
<keyword id="KW-0521">NADP</keyword>
<keyword id="KW-0560">Oxidoreductase</keyword>
<keyword id="KW-0671">Queuosine biosynthesis</keyword>
<feature type="chain" id="PRO_1000213058" description="NADPH-dependent 7-cyano-7-deazaguanine reductase">
    <location>
        <begin position="1"/>
        <end position="282"/>
    </location>
</feature>
<feature type="active site" description="Thioimide intermediate" evidence="1">
    <location>
        <position position="190"/>
    </location>
</feature>
<feature type="active site" description="Proton donor" evidence="1">
    <location>
        <position position="197"/>
    </location>
</feature>
<feature type="binding site" evidence="1">
    <location>
        <begin position="88"/>
        <end position="90"/>
    </location>
    <ligand>
        <name>substrate</name>
    </ligand>
</feature>
<feature type="binding site" evidence="1">
    <location>
        <begin position="90"/>
        <end position="91"/>
    </location>
    <ligand>
        <name>NADPH</name>
        <dbReference type="ChEBI" id="CHEBI:57783"/>
    </ligand>
</feature>
<feature type="binding site" evidence="1">
    <location>
        <begin position="229"/>
        <end position="230"/>
    </location>
    <ligand>
        <name>substrate</name>
    </ligand>
</feature>
<feature type="binding site" evidence="1">
    <location>
        <begin position="258"/>
        <end position="259"/>
    </location>
    <ligand>
        <name>NADPH</name>
        <dbReference type="ChEBI" id="CHEBI:57783"/>
    </ligand>
</feature>
<proteinExistence type="inferred from homology"/>
<evidence type="ECO:0000255" key="1">
    <source>
        <dbReference type="HAMAP-Rule" id="MF_00817"/>
    </source>
</evidence>
<organism>
    <name type="scientific">Escherichia coli O157:H7 (strain EC4115 / EHEC)</name>
    <dbReference type="NCBI Taxonomy" id="444450"/>
    <lineage>
        <taxon>Bacteria</taxon>
        <taxon>Pseudomonadati</taxon>
        <taxon>Pseudomonadota</taxon>
        <taxon>Gammaproteobacteria</taxon>
        <taxon>Enterobacterales</taxon>
        <taxon>Enterobacteriaceae</taxon>
        <taxon>Escherichia</taxon>
    </lineage>
</organism>
<accession>B5Z3F9</accession>